<protein>
    <recommendedName>
        <fullName evidence="1">NAD(P)H-quinone oxidoreductase subunit I, chloroplastic</fullName>
        <ecNumber evidence="1">7.1.1.-</ecNumber>
    </recommendedName>
    <alternativeName>
        <fullName evidence="1">NAD(P)H dehydrogenase subunit I</fullName>
        <shortName evidence="1">NDH subunit I</shortName>
    </alternativeName>
    <alternativeName>
        <fullName evidence="1">NADH-plastoquinone oxidoreductase subunit I</fullName>
    </alternativeName>
</protein>
<comment type="function">
    <text evidence="1">NDH shuttles electrons from NAD(P)H:plastoquinone, via FMN and iron-sulfur (Fe-S) centers, to quinones in the photosynthetic chain and possibly in a chloroplast respiratory chain. The immediate electron acceptor for the enzyme in this species is believed to be plastoquinone. Couples the redox reaction to proton translocation, and thus conserves the redox energy in a proton gradient.</text>
</comment>
<comment type="catalytic activity">
    <reaction evidence="1">
        <text>a plastoquinone + NADH + (n+1) H(+)(in) = a plastoquinol + NAD(+) + n H(+)(out)</text>
        <dbReference type="Rhea" id="RHEA:42608"/>
        <dbReference type="Rhea" id="RHEA-COMP:9561"/>
        <dbReference type="Rhea" id="RHEA-COMP:9562"/>
        <dbReference type="ChEBI" id="CHEBI:15378"/>
        <dbReference type="ChEBI" id="CHEBI:17757"/>
        <dbReference type="ChEBI" id="CHEBI:57540"/>
        <dbReference type="ChEBI" id="CHEBI:57945"/>
        <dbReference type="ChEBI" id="CHEBI:62192"/>
    </reaction>
</comment>
<comment type="catalytic activity">
    <reaction evidence="1">
        <text>a plastoquinone + NADPH + (n+1) H(+)(in) = a plastoquinol + NADP(+) + n H(+)(out)</text>
        <dbReference type="Rhea" id="RHEA:42612"/>
        <dbReference type="Rhea" id="RHEA-COMP:9561"/>
        <dbReference type="Rhea" id="RHEA-COMP:9562"/>
        <dbReference type="ChEBI" id="CHEBI:15378"/>
        <dbReference type="ChEBI" id="CHEBI:17757"/>
        <dbReference type="ChEBI" id="CHEBI:57783"/>
        <dbReference type="ChEBI" id="CHEBI:58349"/>
        <dbReference type="ChEBI" id="CHEBI:62192"/>
    </reaction>
</comment>
<comment type="cofactor">
    <cofactor evidence="1">
        <name>[4Fe-4S] cluster</name>
        <dbReference type="ChEBI" id="CHEBI:49883"/>
    </cofactor>
    <text evidence="1">Binds 2 [4Fe-4S] clusters per subunit.</text>
</comment>
<comment type="subunit">
    <text evidence="1">NDH is composed of at least 16 different subunits, 5 of which are encoded in the nucleus.</text>
</comment>
<comment type="subcellular location">
    <subcellularLocation>
        <location evidence="1">Plastid</location>
        <location evidence="1">Chloroplast thylakoid membrane</location>
        <topology evidence="1">Peripheral membrane protein</topology>
    </subcellularLocation>
</comment>
<comment type="similarity">
    <text evidence="1">Belongs to the complex I 23 kDa subunit family.</text>
</comment>
<evidence type="ECO:0000255" key="1">
    <source>
        <dbReference type="HAMAP-Rule" id="MF_01351"/>
    </source>
</evidence>
<dbReference type="EC" id="7.1.1.-" evidence="1"/>
<dbReference type="EMBL" id="EF115543">
    <property type="protein sequence ID" value="ABK79635.1"/>
    <property type="molecule type" value="Genomic_DNA"/>
</dbReference>
<dbReference type="RefSeq" id="YP_874791.1">
    <property type="nucleotide sequence ID" value="NC_008591.1"/>
</dbReference>
<dbReference type="SMR" id="A1EA63"/>
<dbReference type="GeneID" id="4525040"/>
<dbReference type="GO" id="GO:0009535">
    <property type="term" value="C:chloroplast thylakoid membrane"/>
    <property type="evidence" value="ECO:0007669"/>
    <property type="project" value="UniProtKB-SubCell"/>
</dbReference>
<dbReference type="GO" id="GO:0051539">
    <property type="term" value="F:4 iron, 4 sulfur cluster binding"/>
    <property type="evidence" value="ECO:0007669"/>
    <property type="project" value="UniProtKB-KW"/>
</dbReference>
<dbReference type="GO" id="GO:0005506">
    <property type="term" value="F:iron ion binding"/>
    <property type="evidence" value="ECO:0007669"/>
    <property type="project" value="UniProtKB-UniRule"/>
</dbReference>
<dbReference type="GO" id="GO:0008137">
    <property type="term" value="F:NADH dehydrogenase (ubiquinone) activity"/>
    <property type="evidence" value="ECO:0007669"/>
    <property type="project" value="InterPro"/>
</dbReference>
<dbReference type="GO" id="GO:0048038">
    <property type="term" value="F:quinone binding"/>
    <property type="evidence" value="ECO:0007669"/>
    <property type="project" value="UniProtKB-KW"/>
</dbReference>
<dbReference type="GO" id="GO:0019684">
    <property type="term" value="P:photosynthesis, light reaction"/>
    <property type="evidence" value="ECO:0007669"/>
    <property type="project" value="UniProtKB-UniRule"/>
</dbReference>
<dbReference type="Gene3D" id="3.30.70.3270">
    <property type="match status" value="1"/>
</dbReference>
<dbReference type="HAMAP" id="MF_01351">
    <property type="entry name" value="NDH1_NuoI"/>
    <property type="match status" value="1"/>
</dbReference>
<dbReference type="InterPro" id="IPR017896">
    <property type="entry name" value="4Fe4S_Fe-S-bd"/>
</dbReference>
<dbReference type="InterPro" id="IPR017900">
    <property type="entry name" value="4Fe4S_Fe_S_CS"/>
</dbReference>
<dbReference type="InterPro" id="IPR010226">
    <property type="entry name" value="NADH_quinone_OxRdtase_chainI"/>
</dbReference>
<dbReference type="InterPro" id="IPR004497">
    <property type="entry name" value="NDHI"/>
</dbReference>
<dbReference type="NCBIfam" id="TIGR00403">
    <property type="entry name" value="ndhI"/>
    <property type="match status" value="1"/>
</dbReference>
<dbReference type="NCBIfam" id="TIGR01971">
    <property type="entry name" value="NuoI"/>
    <property type="match status" value="1"/>
</dbReference>
<dbReference type="NCBIfam" id="NF004537">
    <property type="entry name" value="PRK05888.1-3"/>
    <property type="match status" value="1"/>
</dbReference>
<dbReference type="PANTHER" id="PTHR47275">
    <property type="entry name" value="NAD(P)H-QUINONE OXIDOREDUCTASE SUBUNIT I, CHLOROPLASTIC"/>
    <property type="match status" value="1"/>
</dbReference>
<dbReference type="PANTHER" id="PTHR47275:SF3">
    <property type="entry name" value="NAD(P)H-QUINONE OXIDOREDUCTASE SUBUNIT I, CHLOROPLASTIC"/>
    <property type="match status" value="1"/>
</dbReference>
<dbReference type="Pfam" id="PF12838">
    <property type="entry name" value="Fer4_7"/>
    <property type="match status" value="1"/>
</dbReference>
<dbReference type="SUPFAM" id="SSF54862">
    <property type="entry name" value="4Fe-4S ferredoxins"/>
    <property type="match status" value="1"/>
</dbReference>
<dbReference type="PROSITE" id="PS00198">
    <property type="entry name" value="4FE4S_FER_1"/>
    <property type="match status" value="2"/>
</dbReference>
<dbReference type="PROSITE" id="PS51379">
    <property type="entry name" value="4FE4S_FER_2"/>
    <property type="match status" value="2"/>
</dbReference>
<reference key="1">
    <citation type="journal article" date="2007" name="Theor. Appl. Genet.">
        <title>Complete chloroplast genome sequences of Hordeum vulgare, Sorghum bicolor and Agrostis stolonifera, and comparative analyses with other grass genomes.</title>
        <authorList>
            <person name="Saski C."/>
            <person name="Lee S.-B."/>
            <person name="Fjellheim S."/>
            <person name="Guda C."/>
            <person name="Jansen R.K."/>
            <person name="Luo H."/>
            <person name="Tomkins J."/>
            <person name="Rognli O.A."/>
            <person name="Daniell H."/>
            <person name="Clarke J.L."/>
        </authorList>
    </citation>
    <scope>NUCLEOTIDE SEQUENCE [LARGE SCALE GENOMIC DNA]</scope>
    <source>
        <strain>cv. Penn A-4</strain>
    </source>
</reference>
<gene>
    <name evidence="1" type="primary">ndhI</name>
</gene>
<sequence>MFPMVTGFMSYGQQTIRATRYIGQSFITTLSHTNRLPITIHYPYEKSITPERFRGRIHFEFDKCIACEVCVRVCPIDLPVVDWRFEKDIKRKQLLNYSIDFGVCIFCGNCVEYCPTSCLSMTEEYELSTYDRHELNYNQIALSRLPISIMEDYTIQTIRNSTKSKIDEDKSSNSRTITDY</sequence>
<geneLocation type="chloroplast"/>
<accession>A1EA63</accession>
<organism>
    <name type="scientific">Agrostis stolonifera</name>
    <name type="common">Creeping bentgrass</name>
    <dbReference type="NCBI Taxonomy" id="63632"/>
    <lineage>
        <taxon>Eukaryota</taxon>
        <taxon>Viridiplantae</taxon>
        <taxon>Streptophyta</taxon>
        <taxon>Embryophyta</taxon>
        <taxon>Tracheophyta</taxon>
        <taxon>Spermatophyta</taxon>
        <taxon>Magnoliopsida</taxon>
        <taxon>Liliopsida</taxon>
        <taxon>Poales</taxon>
        <taxon>Poaceae</taxon>
        <taxon>BOP clade</taxon>
        <taxon>Pooideae</taxon>
        <taxon>Poodae</taxon>
        <taxon>Poeae</taxon>
        <taxon>Poeae Chloroplast Group 1 (Aveneae type)</taxon>
        <taxon>Agrostidodinae</taxon>
        <taxon>Agrostidinae</taxon>
        <taxon>Agrostis</taxon>
    </lineage>
</organism>
<keyword id="KW-0004">4Fe-4S</keyword>
<keyword id="KW-0150">Chloroplast</keyword>
<keyword id="KW-0408">Iron</keyword>
<keyword id="KW-0411">Iron-sulfur</keyword>
<keyword id="KW-0472">Membrane</keyword>
<keyword id="KW-0479">Metal-binding</keyword>
<keyword id="KW-0520">NAD</keyword>
<keyword id="KW-0521">NADP</keyword>
<keyword id="KW-0934">Plastid</keyword>
<keyword id="KW-0618">Plastoquinone</keyword>
<keyword id="KW-0874">Quinone</keyword>
<keyword id="KW-0677">Repeat</keyword>
<keyword id="KW-0793">Thylakoid</keyword>
<keyword id="KW-1278">Translocase</keyword>
<proteinExistence type="inferred from homology"/>
<name>NDHI_AGRST</name>
<feature type="chain" id="PRO_0000275469" description="NAD(P)H-quinone oxidoreductase subunit I, chloroplastic">
    <location>
        <begin position="1"/>
        <end position="180"/>
    </location>
</feature>
<feature type="domain" description="4Fe-4S ferredoxin-type 1" evidence="1">
    <location>
        <begin position="55"/>
        <end position="84"/>
    </location>
</feature>
<feature type="domain" description="4Fe-4S ferredoxin-type 2" evidence="1">
    <location>
        <begin position="95"/>
        <end position="124"/>
    </location>
</feature>
<feature type="binding site" evidence="1">
    <location>
        <position position="64"/>
    </location>
    <ligand>
        <name>[4Fe-4S] cluster</name>
        <dbReference type="ChEBI" id="CHEBI:49883"/>
        <label>1</label>
    </ligand>
</feature>
<feature type="binding site" evidence="1">
    <location>
        <position position="67"/>
    </location>
    <ligand>
        <name>[4Fe-4S] cluster</name>
        <dbReference type="ChEBI" id="CHEBI:49883"/>
        <label>1</label>
    </ligand>
</feature>
<feature type="binding site" evidence="1">
    <location>
        <position position="70"/>
    </location>
    <ligand>
        <name>[4Fe-4S] cluster</name>
        <dbReference type="ChEBI" id="CHEBI:49883"/>
        <label>1</label>
    </ligand>
</feature>
<feature type="binding site" evidence="1">
    <location>
        <position position="74"/>
    </location>
    <ligand>
        <name>[4Fe-4S] cluster</name>
        <dbReference type="ChEBI" id="CHEBI:49883"/>
        <label>2</label>
    </ligand>
</feature>
<feature type="binding site" evidence="1">
    <location>
        <position position="104"/>
    </location>
    <ligand>
        <name>[4Fe-4S] cluster</name>
        <dbReference type="ChEBI" id="CHEBI:49883"/>
        <label>2</label>
    </ligand>
</feature>
<feature type="binding site" evidence="1">
    <location>
        <position position="107"/>
    </location>
    <ligand>
        <name>[4Fe-4S] cluster</name>
        <dbReference type="ChEBI" id="CHEBI:49883"/>
        <label>2</label>
    </ligand>
</feature>
<feature type="binding site" evidence="1">
    <location>
        <position position="110"/>
    </location>
    <ligand>
        <name>[4Fe-4S] cluster</name>
        <dbReference type="ChEBI" id="CHEBI:49883"/>
        <label>2</label>
    </ligand>
</feature>
<feature type="binding site" evidence="1">
    <location>
        <position position="114"/>
    </location>
    <ligand>
        <name>[4Fe-4S] cluster</name>
        <dbReference type="ChEBI" id="CHEBI:49883"/>
        <label>1</label>
    </ligand>
</feature>